<reference key="1">
    <citation type="journal article" date="2006" name="J. Bacteriol.">
        <title>The genome of the obligately intracellular bacterium Ehrlichia canis reveals themes of complex membrane structure and immune evasion strategies.</title>
        <authorList>
            <person name="Mavromatis K."/>
            <person name="Doyle C.K."/>
            <person name="Lykidis A."/>
            <person name="Ivanova N."/>
            <person name="Francino M.P."/>
            <person name="Chain P."/>
            <person name="Shin M."/>
            <person name="Malfatti S."/>
            <person name="Larimer F."/>
            <person name="Copeland A."/>
            <person name="Detter J.C."/>
            <person name="Land M."/>
            <person name="Richardson P.M."/>
            <person name="Yu X.J."/>
            <person name="Walker D.H."/>
            <person name="McBride J.W."/>
            <person name="Kyrpides N.C."/>
        </authorList>
    </citation>
    <scope>NUCLEOTIDE SEQUENCE [LARGE SCALE GENOMIC DNA]</scope>
    <source>
        <strain>Jake</strain>
    </source>
</reference>
<protein>
    <recommendedName>
        <fullName evidence="1">Glutamate--tRNA ligase 2</fullName>
        <ecNumber evidence="1">6.1.1.17</ecNumber>
    </recommendedName>
    <alternativeName>
        <fullName evidence="1">Glutamyl-tRNA synthetase 2</fullName>
        <shortName evidence="1">GluRS 2</shortName>
    </alternativeName>
</protein>
<gene>
    <name evidence="1" type="primary">gltX2</name>
    <name type="ordered locus">Ecaj_0795</name>
</gene>
<organism>
    <name type="scientific">Ehrlichia canis (strain Jake)</name>
    <dbReference type="NCBI Taxonomy" id="269484"/>
    <lineage>
        <taxon>Bacteria</taxon>
        <taxon>Pseudomonadati</taxon>
        <taxon>Pseudomonadota</taxon>
        <taxon>Alphaproteobacteria</taxon>
        <taxon>Rickettsiales</taxon>
        <taxon>Anaplasmataceae</taxon>
        <taxon>Ehrlichia</taxon>
    </lineage>
</organism>
<name>SYE2_EHRCJ</name>
<comment type="function">
    <text evidence="1">Catalyzes the attachment of glutamate to tRNA(Glu) in a two-step reaction: glutamate is first activated by ATP to form Glu-AMP and then transferred to the acceptor end of tRNA(Glu).</text>
</comment>
<comment type="catalytic activity">
    <reaction evidence="1">
        <text>tRNA(Glu) + L-glutamate + ATP = L-glutamyl-tRNA(Glu) + AMP + diphosphate</text>
        <dbReference type="Rhea" id="RHEA:23540"/>
        <dbReference type="Rhea" id="RHEA-COMP:9663"/>
        <dbReference type="Rhea" id="RHEA-COMP:9680"/>
        <dbReference type="ChEBI" id="CHEBI:29985"/>
        <dbReference type="ChEBI" id="CHEBI:30616"/>
        <dbReference type="ChEBI" id="CHEBI:33019"/>
        <dbReference type="ChEBI" id="CHEBI:78442"/>
        <dbReference type="ChEBI" id="CHEBI:78520"/>
        <dbReference type="ChEBI" id="CHEBI:456215"/>
        <dbReference type="EC" id="6.1.1.17"/>
    </reaction>
</comment>
<comment type="subunit">
    <text evidence="1">Monomer.</text>
</comment>
<comment type="subcellular location">
    <subcellularLocation>
        <location evidence="1">Cytoplasm</location>
    </subcellularLocation>
</comment>
<comment type="similarity">
    <text evidence="1">Belongs to the class-I aminoacyl-tRNA synthetase family. Glutamate--tRNA ligase type 1 subfamily.</text>
</comment>
<keyword id="KW-0030">Aminoacyl-tRNA synthetase</keyword>
<keyword id="KW-0067">ATP-binding</keyword>
<keyword id="KW-0963">Cytoplasm</keyword>
<keyword id="KW-0436">Ligase</keyword>
<keyword id="KW-0547">Nucleotide-binding</keyword>
<keyword id="KW-0648">Protein biosynthesis</keyword>
<proteinExistence type="inferred from homology"/>
<dbReference type="EC" id="6.1.1.17" evidence="1"/>
<dbReference type="EMBL" id="CP000107">
    <property type="protein sequence ID" value="AAZ68826.1"/>
    <property type="molecule type" value="Genomic_DNA"/>
</dbReference>
<dbReference type="SMR" id="Q3YR29"/>
<dbReference type="STRING" id="269484.Ecaj_0795"/>
<dbReference type="KEGG" id="ecn:Ecaj_0795"/>
<dbReference type="eggNOG" id="COG0008">
    <property type="taxonomic scope" value="Bacteria"/>
</dbReference>
<dbReference type="HOGENOM" id="CLU_015768_6_1_5"/>
<dbReference type="InParanoid" id="Q3YR29"/>
<dbReference type="Proteomes" id="UP000000435">
    <property type="component" value="Chromosome"/>
</dbReference>
<dbReference type="GO" id="GO:0005737">
    <property type="term" value="C:cytoplasm"/>
    <property type="evidence" value="ECO:0007669"/>
    <property type="project" value="UniProtKB-SubCell"/>
</dbReference>
<dbReference type="GO" id="GO:0005524">
    <property type="term" value="F:ATP binding"/>
    <property type="evidence" value="ECO:0007669"/>
    <property type="project" value="UniProtKB-UniRule"/>
</dbReference>
<dbReference type="GO" id="GO:0004818">
    <property type="term" value="F:glutamate-tRNA ligase activity"/>
    <property type="evidence" value="ECO:0007669"/>
    <property type="project" value="UniProtKB-UniRule"/>
</dbReference>
<dbReference type="GO" id="GO:0000049">
    <property type="term" value="F:tRNA binding"/>
    <property type="evidence" value="ECO:0007669"/>
    <property type="project" value="InterPro"/>
</dbReference>
<dbReference type="GO" id="GO:0006424">
    <property type="term" value="P:glutamyl-tRNA aminoacylation"/>
    <property type="evidence" value="ECO:0007669"/>
    <property type="project" value="UniProtKB-UniRule"/>
</dbReference>
<dbReference type="Gene3D" id="1.10.10.350">
    <property type="match status" value="1"/>
</dbReference>
<dbReference type="Gene3D" id="3.40.50.620">
    <property type="entry name" value="HUPs"/>
    <property type="match status" value="1"/>
</dbReference>
<dbReference type="HAMAP" id="MF_00022">
    <property type="entry name" value="Glu_tRNA_synth_type1"/>
    <property type="match status" value="1"/>
</dbReference>
<dbReference type="InterPro" id="IPR045462">
    <property type="entry name" value="aa-tRNA-synth_I_cd-bd"/>
</dbReference>
<dbReference type="InterPro" id="IPR020751">
    <property type="entry name" value="aa-tRNA-synth_I_codon-bd_sub2"/>
</dbReference>
<dbReference type="InterPro" id="IPR001412">
    <property type="entry name" value="aa-tRNA-synth_I_CS"/>
</dbReference>
<dbReference type="InterPro" id="IPR008925">
    <property type="entry name" value="aa_tRNA-synth_I_cd-bd_sf"/>
</dbReference>
<dbReference type="InterPro" id="IPR004527">
    <property type="entry name" value="Glu-tRNA-ligase_bac/mito"/>
</dbReference>
<dbReference type="InterPro" id="IPR000924">
    <property type="entry name" value="Glu/Gln-tRNA-synth"/>
</dbReference>
<dbReference type="InterPro" id="IPR020058">
    <property type="entry name" value="Glu/Gln-tRNA-synth_Ib_cat-dom"/>
</dbReference>
<dbReference type="InterPro" id="IPR049940">
    <property type="entry name" value="GluQ/Sye"/>
</dbReference>
<dbReference type="InterPro" id="IPR014729">
    <property type="entry name" value="Rossmann-like_a/b/a_fold"/>
</dbReference>
<dbReference type="NCBIfam" id="TIGR00464">
    <property type="entry name" value="gltX_bact"/>
    <property type="match status" value="1"/>
</dbReference>
<dbReference type="PANTHER" id="PTHR43311">
    <property type="entry name" value="GLUTAMATE--TRNA LIGASE"/>
    <property type="match status" value="1"/>
</dbReference>
<dbReference type="PANTHER" id="PTHR43311:SF2">
    <property type="entry name" value="GLUTAMATE--TRNA LIGASE, MITOCHONDRIAL-RELATED"/>
    <property type="match status" value="1"/>
</dbReference>
<dbReference type="Pfam" id="PF19269">
    <property type="entry name" value="Anticodon_2"/>
    <property type="match status" value="1"/>
</dbReference>
<dbReference type="Pfam" id="PF00749">
    <property type="entry name" value="tRNA-synt_1c"/>
    <property type="match status" value="1"/>
</dbReference>
<dbReference type="PRINTS" id="PR00987">
    <property type="entry name" value="TRNASYNTHGLU"/>
</dbReference>
<dbReference type="SUPFAM" id="SSF48163">
    <property type="entry name" value="An anticodon-binding domain of class I aminoacyl-tRNA synthetases"/>
    <property type="match status" value="1"/>
</dbReference>
<dbReference type="SUPFAM" id="SSF52374">
    <property type="entry name" value="Nucleotidylyl transferase"/>
    <property type="match status" value="1"/>
</dbReference>
<dbReference type="PROSITE" id="PS00178">
    <property type="entry name" value="AA_TRNA_LIGASE_I"/>
    <property type="match status" value="1"/>
</dbReference>
<feature type="chain" id="PRO_0000237361" description="Glutamate--tRNA ligase 2">
    <location>
        <begin position="1"/>
        <end position="443"/>
    </location>
</feature>
<feature type="short sequence motif" description="'HIGH' region" evidence="1">
    <location>
        <begin position="7"/>
        <end position="17"/>
    </location>
</feature>
<feature type="short sequence motif" description="'KMSKS' region" evidence="1">
    <location>
        <begin position="236"/>
        <end position="240"/>
    </location>
</feature>
<feature type="binding site" evidence="1">
    <location>
        <position position="239"/>
    </location>
    <ligand>
        <name>ATP</name>
        <dbReference type="ChEBI" id="CHEBI:30616"/>
    </ligand>
</feature>
<evidence type="ECO:0000255" key="1">
    <source>
        <dbReference type="HAMAP-Rule" id="MF_00022"/>
    </source>
</evidence>
<sequence length="443" mass="51549">MITRFAPSPTGYLHVGNVRTALICWLYVRKQKGKFLLRFDDTDTQRSQEEYIKEIENDLKWLNMNWDASFRQSSRFDRYEDVFQYLLKEGFLYPCYESKEELEFKRKMKLKSGLPPIYDRSALNLTQAEKDKYFGRAPYFRFKINQDQLINWDDEIRGKVSFNPKNISDPIIRRVDGTYTYMLPSVIDDMDFNVTHVIRGEDHISNTAVQIQMLDALKAKVPMFAHLSLLYSDDNKISKRVGGSSVKDMQLYELEPMAINSYFAKIGTSHPIDVHINMLGLINSFDITAFSQAPTKFNIDDILKLNPKILHNMSFDDVKDRLKELKIDKPAFWDFVCGNIEKFSDIEEWIKICSRDMVPVVKQDDKDFITLALNMFPQGEVHDSTWNTWVSNIKQQTDRRGKNLFAPLRLALTGLAAGPELAKLLPLIGREEIVRRLSYSVTQ</sequence>
<accession>Q3YR29</accession>